<protein>
    <recommendedName>
        <fullName evidence="1">RQC P-site tRNA stabilizing factor</fullName>
        <shortName evidence="1">RqcP</shortName>
    </recommendedName>
    <alternativeName>
        <fullName evidence="1">Ribosome-associated protein quality control protein P</fullName>
    </alternativeName>
</protein>
<keyword id="KW-0002">3D-structure</keyword>
<keyword id="KW-0648">Protein biosynthesis</keyword>
<keyword id="KW-1185">Reference proteome</keyword>
<keyword id="KW-0694">RNA-binding</keyword>
<keyword id="KW-0699">rRNA-binding</keyword>
<keyword id="KW-0820">tRNA-binding</keyword>
<gene>
    <name evidence="1" type="primary">rqcP</name>
    <name type="ordered locus">HP_1423</name>
</gene>
<reference key="1">
    <citation type="journal article" date="1997" name="Nature">
        <title>The complete genome sequence of the gastric pathogen Helicobacter pylori.</title>
        <authorList>
            <person name="Tomb J.-F."/>
            <person name="White O."/>
            <person name="Kerlavage A.R."/>
            <person name="Clayton R.A."/>
            <person name="Sutton G.G."/>
            <person name="Fleischmann R.D."/>
            <person name="Ketchum K.A."/>
            <person name="Klenk H.-P."/>
            <person name="Gill S.R."/>
            <person name="Dougherty B.A."/>
            <person name="Nelson K.E."/>
            <person name="Quackenbush J."/>
            <person name="Zhou L."/>
            <person name="Kirkness E.F."/>
            <person name="Peterson S.N."/>
            <person name="Loftus B.J."/>
            <person name="Richardson D.L."/>
            <person name="Dodson R.J."/>
            <person name="Khalak H.G."/>
            <person name="Glodek A."/>
            <person name="McKenney K."/>
            <person name="FitzGerald L.M."/>
            <person name="Lee N."/>
            <person name="Adams M.D."/>
            <person name="Hickey E.K."/>
            <person name="Berg D.E."/>
            <person name="Gocayne J.D."/>
            <person name="Utterback T.R."/>
            <person name="Peterson J.D."/>
            <person name="Kelley J.M."/>
            <person name="Cotton M.D."/>
            <person name="Weidman J.F."/>
            <person name="Fujii C."/>
            <person name="Bowman C."/>
            <person name="Watthey L."/>
            <person name="Wallin E."/>
            <person name="Hayes W.S."/>
            <person name="Borodovsky M."/>
            <person name="Karp P.D."/>
            <person name="Smith H.O."/>
            <person name="Fraser C.M."/>
            <person name="Venter J.C."/>
        </authorList>
    </citation>
    <scope>NUCLEOTIDE SEQUENCE [LARGE SCALE GENOMIC DNA]</scope>
    <source>
        <strain>ATCC 700392 / 26695</strain>
    </source>
</reference>
<reference evidence="2" key="2">
    <citation type="journal article" date="2009" name="Proteins">
        <title>Solution structure of hypothetical protein HP1423 (Y1423_HELPY) reveals the presence of alphaL motif related to RNA binding.</title>
        <authorList>
            <person name="Kim J.H."/>
            <person name="Park S.J."/>
            <person name="Lee K.Y."/>
            <person name="Son W.S."/>
            <person name="Sohn N.Y."/>
            <person name="Kwon A.R."/>
            <person name="Lee B.J."/>
        </authorList>
    </citation>
    <scope>STRUCTURE BY NMR</scope>
    <source>
        <strain>ATCC 700392 / 26695</strain>
    </source>
</reference>
<comment type="function">
    <text evidence="1">Key component of the ribosome quality control system (RQC), a ribosome-associated complex that mediates the extraction of incompletely synthesized nascent chains from stalled ribosomes and their subsequent degradation. RqcH recruits Ala-charged tRNA, and with RqcP directs the elongation of stalled nascent chains on 50S ribosomal subunits, leading to non-templated C-terminal alanine extensions (Ala tail). The Ala tail promotes nascent chain degradation. RqcP is associated with the translocation-like movement of the peptidyl-tRNA from the A-site into the P-site.</text>
</comment>
<comment type="subunit">
    <text evidence="1">Associates with stalled 50S ribosomal subunits. Binds to RqcH, 23S rRNA and the P-site tRNA. Does not require RqcH for association with 50S subunits.</text>
</comment>
<comment type="similarity">
    <text evidence="1">Belongs to the RqcP family.</text>
</comment>
<dbReference type="EMBL" id="AE000511">
    <property type="protein sequence ID" value="AAD08465.1"/>
    <property type="molecule type" value="Genomic_DNA"/>
</dbReference>
<dbReference type="PIR" id="G64697">
    <property type="entry name" value="G64697"/>
</dbReference>
<dbReference type="RefSeq" id="NP_208214.1">
    <property type="nucleotide sequence ID" value="NC_000915.1"/>
</dbReference>
<dbReference type="RefSeq" id="WP_001217155.1">
    <property type="nucleotide sequence ID" value="NC_018939.1"/>
</dbReference>
<dbReference type="PDB" id="2K6P">
    <property type="method" value="NMR"/>
    <property type="chains" value="A=1-84"/>
</dbReference>
<dbReference type="PDBsum" id="2K6P"/>
<dbReference type="SMR" id="O25966"/>
<dbReference type="DIP" id="DIP-3730N"/>
<dbReference type="IntAct" id="O25966">
    <property type="interactions" value="7"/>
</dbReference>
<dbReference type="MINT" id="O25966"/>
<dbReference type="STRING" id="85962.HP_1423"/>
<dbReference type="PaxDb" id="85962-C694_07360"/>
<dbReference type="EnsemblBacteria" id="AAD08465">
    <property type="protein sequence ID" value="AAD08465"/>
    <property type="gene ID" value="HP_1423"/>
</dbReference>
<dbReference type="KEGG" id="heo:C694_07360"/>
<dbReference type="KEGG" id="hpy:HP_1423"/>
<dbReference type="PATRIC" id="fig|85962.47.peg.1527"/>
<dbReference type="eggNOG" id="COG1188">
    <property type="taxonomic scope" value="Bacteria"/>
</dbReference>
<dbReference type="InParanoid" id="O25966"/>
<dbReference type="OrthoDB" id="9797176at2"/>
<dbReference type="PhylomeDB" id="O25966"/>
<dbReference type="EvolutionaryTrace" id="O25966"/>
<dbReference type="Proteomes" id="UP000000429">
    <property type="component" value="Chromosome"/>
</dbReference>
<dbReference type="GO" id="GO:0019843">
    <property type="term" value="F:rRNA binding"/>
    <property type="evidence" value="ECO:0007669"/>
    <property type="project" value="UniProtKB-KW"/>
</dbReference>
<dbReference type="GO" id="GO:0000049">
    <property type="term" value="F:tRNA binding"/>
    <property type="evidence" value="ECO:0007669"/>
    <property type="project" value="UniProtKB-KW"/>
</dbReference>
<dbReference type="GO" id="GO:0006412">
    <property type="term" value="P:translation"/>
    <property type="evidence" value="ECO:0007669"/>
    <property type="project" value="UniProtKB-KW"/>
</dbReference>
<dbReference type="CDD" id="cd00165">
    <property type="entry name" value="S4"/>
    <property type="match status" value="1"/>
</dbReference>
<dbReference type="Gene3D" id="3.10.290.10">
    <property type="entry name" value="RNA-binding S4 domain"/>
    <property type="match status" value="1"/>
</dbReference>
<dbReference type="HAMAP" id="MF_00871">
    <property type="entry name" value="RqcP"/>
    <property type="match status" value="1"/>
</dbReference>
<dbReference type="InterPro" id="IPR025490">
    <property type="entry name" value="RqcP"/>
</dbReference>
<dbReference type="InterPro" id="IPR002942">
    <property type="entry name" value="S4_RNA-bd"/>
</dbReference>
<dbReference type="InterPro" id="IPR036986">
    <property type="entry name" value="S4_RNA-bd_sf"/>
</dbReference>
<dbReference type="Pfam" id="PF01479">
    <property type="entry name" value="S4"/>
    <property type="match status" value="1"/>
</dbReference>
<dbReference type="PIRSF" id="PIRSF038881">
    <property type="entry name" value="RNAbp_HP1423"/>
    <property type="match status" value="1"/>
</dbReference>
<dbReference type="SMART" id="SM00363">
    <property type="entry name" value="S4"/>
    <property type="match status" value="1"/>
</dbReference>
<dbReference type="SUPFAM" id="SSF55174">
    <property type="entry name" value="Alpha-L RNA-binding motif"/>
    <property type="match status" value="1"/>
</dbReference>
<dbReference type="PROSITE" id="PS50889">
    <property type="entry name" value="S4"/>
    <property type="match status" value="1"/>
</dbReference>
<name>RQCP_HELPY</name>
<evidence type="ECO:0000255" key="1">
    <source>
        <dbReference type="HAMAP-Rule" id="MF_00871"/>
    </source>
</evidence>
<evidence type="ECO:0007744" key="2">
    <source>
        <dbReference type="PDB" id="2K6P"/>
    </source>
</evidence>
<evidence type="ECO:0007829" key="3">
    <source>
        <dbReference type="PDB" id="2K6P"/>
    </source>
</evidence>
<accession>O25966</accession>
<organism>
    <name type="scientific">Helicobacter pylori (strain ATCC 700392 / 26695)</name>
    <name type="common">Campylobacter pylori</name>
    <dbReference type="NCBI Taxonomy" id="85962"/>
    <lineage>
        <taxon>Bacteria</taxon>
        <taxon>Pseudomonadati</taxon>
        <taxon>Campylobacterota</taxon>
        <taxon>Epsilonproteobacteria</taxon>
        <taxon>Campylobacterales</taxon>
        <taxon>Helicobacteraceae</taxon>
        <taxon>Helicobacter</taxon>
    </lineage>
</organism>
<proteinExistence type="evidence at protein level"/>
<sequence>MRIDKFLQSVGLVKRRVLATDMCNVGAVWLNGSCAKASKEVKAGDTISLHYLKGIEEYTILQIPALKNVPRKDTHLYIAPKTKE</sequence>
<feature type="chain" id="PRO_0000201747" description="RQC P-site tRNA stabilizing factor">
    <location>
        <begin position="1"/>
        <end position="84"/>
    </location>
</feature>
<feature type="domain" description="S4 RNA-binding" evidence="1">
    <location>
        <begin position="1"/>
        <end position="64"/>
    </location>
</feature>
<feature type="helix" evidence="3">
    <location>
        <begin position="3"/>
        <end position="6"/>
    </location>
</feature>
<feature type="turn" evidence="3">
    <location>
        <begin position="8"/>
        <end position="11"/>
    </location>
</feature>
<feature type="turn" evidence="3">
    <location>
        <begin position="22"/>
        <end position="26"/>
    </location>
</feature>
<feature type="strand" evidence="3">
    <location>
        <begin position="46"/>
        <end position="49"/>
    </location>
</feature>
<feature type="strand" evidence="3">
    <location>
        <begin position="56"/>
        <end position="60"/>
    </location>
</feature>
<feature type="strand" evidence="3">
    <location>
        <begin position="71"/>
        <end position="73"/>
    </location>
</feature>
<feature type="strand" evidence="3">
    <location>
        <begin position="76"/>
        <end position="80"/>
    </location>
</feature>